<keyword id="KW-0002">3D-structure</keyword>
<keyword id="KW-0963">Cytoplasm</keyword>
<keyword id="KW-0235">DNA replication</keyword>
<keyword id="KW-0238">DNA-binding</keyword>
<keyword id="KW-0239">DNA-directed DNA polymerase</keyword>
<keyword id="KW-0548">Nucleotidyltransferase</keyword>
<keyword id="KW-1185">Reference proteome</keyword>
<keyword id="KW-0808">Transferase</keyword>
<reference key="1">
    <citation type="journal article" date="2001" name="Proc. Natl. Acad. Sci. U.S.A.">
        <title>Complete genome sequence of Caulobacter crescentus.</title>
        <authorList>
            <person name="Nierman W.C."/>
            <person name="Feldblyum T.V."/>
            <person name="Laub M.T."/>
            <person name="Paulsen I.T."/>
            <person name="Nelson K.E."/>
            <person name="Eisen J.A."/>
            <person name="Heidelberg J.F."/>
            <person name="Alley M.R.K."/>
            <person name="Ohta N."/>
            <person name="Maddock J.R."/>
            <person name="Potocka I."/>
            <person name="Nelson W.C."/>
            <person name="Newton A."/>
            <person name="Stephens C."/>
            <person name="Phadke N.D."/>
            <person name="Ely B."/>
            <person name="DeBoy R.T."/>
            <person name="Dodson R.J."/>
            <person name="Durkin A.S."/>
            <person name="Gwinn M.L."/>
            <person name="Haft D.H."/>
            <person name="Kolonay J.F."/>
            <person name="Smit J."/>
            <person name="Craven M.B."/>
            <person name="Khouri H.M."/>
            <person name="Shetty J."/>
            <person name="Berry K.J."/>
            <person name="Utterback T.R."/>
            <person name="Tran K."/>
            <person name="Wolf A.M."/>
            <person name="Vamathevan J.J."/>
            <person name="Ermolaeva M.D."/>
            <person name="White O."/>
            <person name="Salzberg S.L."/>
            <person name="Venter J.C."/>
            <person name="Shapiro L."/>
            <person name="Fraser C.M."/>
        </authorList>
    </citation>
    <scope>NUCLEOTIDE SEQUENCE [LARGE SCALE GENOMIC DNA]</scope>
    <source>
        <strain>ATCC 19089 / CIP 103742 / CB 15</strain>
    </source>
</reference>
<gene>
    <name type="primary">dnaN</name>
    <name type="ordered locus">CC_0156</name>
</gene>
<sequence>MKLTIERAALLKALGHVQSVVERRNTIPILSNILLSAEGDRLSFSATDLDMEIIDEGFAQIDVPGQITAPAHTLYEIVRKLPDGADVSLSFSGDDPRLVIQAGRSRFNLPVLPAGDFPVMSSDGLSSRIAVDTNELIRLIDKTRFAISTEETRYYLNGLYVHTVNEGGETKLRAVATDGHRLALAEMPAPEGAVGIPGVIVPRKTIAEARRLMESAGETVDLQVSPQKVRFEFGAAALTSKVIDGAFPDYMRVIPRDNAKILTLDNDLFAKAVDRVATISAEKSRSVKLAVEPGRITLTVRNMEAGQAVEEVEVDYDGEPFEIGFNARYLLDVCGQIAGPQAEFRFADPASPTLVVDPVDPGVKYVLMPLRV</sequence>
<dbReference type="EMBL" id="AE005673">
    <property type="protein sequence ID" value="AAK22143.1"/>
    <property type="molecule type" value="Genomic_DNA"/>
</dbReference>
<dbReference type="PIR" id="C87268">
    <property type="entry name" value="C87268"/>
</dbReference>
<dbReference type="RefSeq" id="NP_418975.1">
    <property type="nucleotide sequence ID" value="NC_002696.2"/>
</dbReference>
<dbReference type="RefSeq" id="WP_010918045.1">
    <property type="nucleotide sequence ID" value="NC_002696.2"/>
</dbReference>
<dbReference type="PDB" id="5WCE">
    <property type="method" value="X-ray"/>
    <property type="resolution" value="1.90 A"/>
    <property type="chains" value="A/B=1-372"/>
</dbReference>
<dbReference type="PDB" id="6IZO">
    <property type="method" value="X-ray"/>
    <property type="resolution" value="1.94 A"/>
    <property type="chains" value="A/B=1-372"/>
</dbReference>
<dbReference type="PDB" id="6JIR">
    <property type="method" value="X-ray"/>
    <property type="resolution" value="1.95 A"/>
    <property type="chains" value="A/B=1-372"/>
</dbReference>
<dbReference type="PDBsum" id="5WCE"/>
<dbReference type="PDBsum" id="6IZO"/>
<dbReference type="PDBsum" id="6JIR"/>
<dbReference type="SMR" id="P0CAU5"/>
<dbReference type="STRING" id="190650.CC_0156"/>
<dbReference type="EnsemblBacteria" id="AAK22143">
    <property type="protein sequence ID" value="AAK22143"/>
    <property type="gene ID" value="CC_0156"/>
</dbReference>
<dbReference type="KEGG" id="ccr:CC_0156"/>
<dbReference type="PATRIC" id="fig|190650.5.peg.152"/>
<dbReference type="eggNOG" id="COG0592">
    <property type="taxonomic scope" value="Bacteria"/>
</dbReference>
<dbReference type="HOGENOM" id="CLU_038149_4_2_5"/>
<dbReference type="BioCyc" id="CAULO:CC0156-MONOMER"/>
<dbReference type="Proteomes" id="UP000001816">
    <property type="component" value="Chromosome"/>
</dbReference>
<dbReference type="GO" id="GO:0005737">
    <property type="term" value="C:cytoplasm"/>
    <property type="evidence" value="ECO:0007669"/>
    <property type="project" value="UniProtKB-SubCell"/>
</dbReference>
<dbReference type="GO" id="GO:0009360">
    <property type="term" value="C:DNA polymerase III complex"/>
    <property type="evidence" value="ECO:0007669"/>
    <property type="project" value="InterPro"/>
</dbReference>
<dbReference type="GO" id="GO:0008408">
    <property type="term" value="F:3'-5' exonuclease activity"/>
    <property type="evidence" value="ECO:0007669"/>
    <property type="project" value="InterPro"/>
</dbReference>
<dbReference type="GO" id="GO:0003677">
    <property type="term" value="F:DNA binding"/>
    <property type="evidence" value="ECO:0007669"/>
    <property type="project" value="UniProtKB-KW"/>
</dbReference>
<dbReference type="GO" id="GO:0003887">
    <property type="term" value="F:DNA-directed DNA polymerase activity"/>
    <property type="evidence" value="ECO:0007669"/>
    <property type="project" value="UniProtKB-KW"/>
</dbReference>
<dbReference type="GO" id="GO:0006271">
    <property type="term" value="P:DNA strand elongation involved in DNA replication"/>
    <property type="evidence" value="ECO:0007669"/>
    <property type="project" value="TreeGrafter"/>
</dbReference>
<dbReference type="CDD" id="cd00140">
    <property type="entry name" value="beta_clamp"/>
    <property type="match status" value="1"/>
</dbReference>
<dbReference type="Gene3D" id="3.10.150.10">
    <property type="entry name" value="DNA Polymerase III, subunit A, domain 2"/>
    <property type="match status" value="3"/>
</dbReference>
<dbReference type="InterPro" id="IPR046938">
    <property type="entry name" value="DNA_clamp_sf"/>
</dbReference>
<dbReference type="InterPro" id="IPR001001">
    <property type="entry name" value="DNA_polIII_beta"/>
</dbReference>
<dbReference type="InterPro" id="IPR022635">
    <property type="entry name" value="DNA_polIII_beta_C"/>
</dbReference>
<dbReference type="InterPro" id="IPR022637">
    <property type="entry name" value="DNA_polIII_beta_cen"/>
</dbReference>
<dbReference type="InterPro" id="IPR022634">
    <property type="entry name" value="DNA_polIII_beta_N"/>
</dbReference>
<dbReference type="NCBIfam" id="TIGR00663">
    <property type="entry name" value="dnan"/>
    <property type="match status" value="1"/>
</dbReference>
<dbReference type="PANTHER" id="PTHR30478:SF0">
    <property type="entry name" value="BETA SLIDING CLAMP"/>
    <property type="match status" value="1"/>
</dbReference>
<dbReference type="PANTHER" id="PTHR30478">
    <property type="entry name" value="DNA POLYMERASE III SUBUNIT BETA"/>
    <property type="match status" value="1"/>
</dbReference>
<dbReference type="Pfam" id="PF00712">
    <property type="entry name" value="DNA_pol3_beta"/>
    <property type="match status" value="1"/>
</dbReference>
<dbReference type="Pfam" id="PF02767">
    <property type="entry name" value="DNA_pol3_beta_2"/>
    <property type="match status" value="1"/>
</dbReference>
<dbReference type="Pfam" id="PF02768">
    <property type="entry name" value="DNA_pol3_beta_3"/>
    <property type="match status" value="1"/>
</dbReference>
<dbReference type="PIRSF" id="PIRSF000804">
    <property type="entry name" value="DNA_pol_III_b"/>
    <property type="match status" value="1"/>
</dbReference>
<dbReference type="SMART" id="SM00480">
    <property type="entry name" value="POL3Bc"/>
    <property type="match status" value="1"/>
</dbReference>
<dbReference type="SUPFAM" id="SSF55979">
    <property type="entry name" value="DNA clamp"/>
    <property type="match status" value="3"/>
</dbReference>
<protein>
    <recommendedName>
        <fullName>Beta sliding clamp</fullName>
        <shortName>Beta clamp</shortName>
        <shortName>Sliding clamp</shortName>
    </recommendedName>
    <alternativeName>
        <fullName>Beta-clamp processivity factor</fullName>
    </alternativeName>
    <alternativeName>
        <fullName>DNA polymerase III beta sliding clamp subunit</fullName>
    </alternativeName>
    <alternativeName>
        <fullName>DNA polymerase III subunit beta</fullName>
    </alternativeName>
</protein>
<feature type="chain" id="PRO_0000105430" description="Beta sliding clamp">
    <location>
        <begin position="1"/>
        <end position="372"/>
    </location>
</feature>
<feature type="strand" evidence="3">
    <location>
        <begin position="2"/>
        <end position="6"/>
    </location>
</feature>
<feature type="helix" evidence="3">
    <location>
        <begin position="7"/>
        <end position="18"/>
    </location>
</feature>
<feature type="helix" evidence="3">
    <location>
        <begin position="28"/>
        <end position="31"/>
    </location>
</feature>
<feature type="strand" evidence="3">
    <location>
        <begin position="32"/>
        <end position="38"/>
    </location>
</feature>
<feature type="strand" evidence="3">
    <location>
        <begin position="41"/>
        <end position="47"/>
    </location>
</feature>
<feature type="strand" evidence="3">
    <location>
        <begin position="49"/>
        <end position="58"/>
    </location>
</feature>
<feature type="strand" evidence="3">
    <location>
        <begin position="60"/>
        <end position="63"/>
    </location>
</feature>
<feature type="strand" evidence="3">
    <location>
        <begin position="65"/>
        <end position="70"/>
    </location>
</feature>
<feature type="helix" evidence="3">
    <location>
        <begin position="71"/>
        <end position="80"/>
    </location>
</feature>
<feature type="strand" evidence="3">
    <location>
        <begin position="86"/>
        <end position="90"/>
    </location>
</feature>
<feature type="strand" evidence="5">
    <location>
        <begin position="93"/>
        <end position="95"/>
    </location>
</feature>
<feature type="strand" evidence="3">
    <location>
        <begin position="96"/>
        <end position="102"/>
    </location>
</feature>
<feature type="strand" evidence="3">
    <location>
        <begin position="105"/>
        <end position="109"/>
    </location>
</feature>
<feature type="helix" evidence="3">
    <location>
        <begin position="114"/>
        <end position="116"/>
    </location>
</feature>
<feature type="strand" evidence="3">
    <location>
        <begin position="129"/>
        <end position="132"/>
    </location>
</feature>
<feature type="helix" evidence="3">
    <location>
        <begin position="133"/>
        <end position="141"/>
    </location>
</feature>
<feature type="helix" evidence="3">
    <location>
        <begin position="144"/>
        <end position="146"/>
    </location>
</feature>
<feature type="strand" evidence="4">
    <location>
        <begin position="152"/>
        <end position="154"/>
    </location>
</feature>
<feature type="strand" evidence="3">
    <location>
        <begin position="157"/>
        <end position="166"/>
    </location>
</feature>
<feature type="strand" evidence="3">
    <location>
        <begin position="169"/>
        <end position="177"/>
    </location>
</feature>
<feature type="strand" evidence="3">
    <location>
        <begin position="179"/>
        <end position="188"/>
    </location>
</feature>
<feature type="turn" evidence="3">
    <location>
        <begin position="191"/>
        <end position="195"/>
    </location>
</feature>
<feature type="strand" evidence="3">
    <location>
        <begin position="199"/>
        <end position="202"/>
    </location>
</feature>
<feature type="helix" evidence="3">
    <location>
        <begin position="203"/>
        <end position="213"/>
    </location>
</feature>
<feature type="strand" evidence="3">
    <location>
        <begin position="218"/>
        <end position="224"/>
    </location>
</feature>
<feature type="strand" evidence="3">
    <location>
        <begin position="226"/>
        <end position="233"/>
    </location>
</feature>
<feature type="strand" evidence="3">
    <location>
        <begin position="236"/>
        <end position="241"/>
    </location>
</feature>
<feature type="helix" evidence="3">
    <location>
        <begin position="250"/>
        <end position="252"/>
    </location>
</feature>
<feature type="strand" evidence="3">
    <location>
        <begin position="260"/>
        <end position="265"/>
    </location>
</feature>
<feature type="helix" evidence="3">
    <location>
        <begin position="266"/>
        <end position="277"/>
    </location>
</feature>
<feature type="strand" evidence="3">
    <location>
        <begin position="282"/>
        <end position="284"/>
    </location>
</feature>
<feature type="strand" evidence="3">
    <location>
        <begin position="286"/>
        <end position="292"/>
    </location>
</feature>
<feature type="strand" evidence="3">
    <location>
        <begin position="295"/>
        <end position="301"/>
    </location>
</feature>
<feature type="strand" evidence="5">
    <location>
        <begin position="303"/>
        <end position="305"/>
    </location>
</feature>
<feature type="strand" evidence="3">
    <location>
        <begin position="307"/>
        <end position="313"/>
    </location>
</feature>
<feature type="strand" evidence="3">
    <location>
        <begin position="321"/>
        <end position="326"/>
    </location>
</feature>
<feature type="helix" evidence="3">
    <location>
        <begin position="327"/>
        <end position="336"/>
    </location>
</feature>
<feature type="strand" evidence="3">
    <location>
        <begin position="339"/>
        <end position="346"/>
    </location>
</feature>
<feature type="strand" evidence="3">
    <location>
        <begin position="353"/>
        <end position="357"/>
    </location>
</feature>
<feature type="strand" evidence="3">
    <location>
        <begin position="360"/>
        <end position="367"/>
    </location>
</feature>
<proteinExistence type="evidence at protein level"/>
<organism>
    <name type="scientific">Caulobacter vibrioides (strain ATCC 19089 / CIP 103742 / CB 15)</name>
    <name type="common">Caulobacter crescentus</name>
    <dbReference type="NCBI Taxonomy" id="190650"/>
    <lineage>
        <taxon>Bacteria</taxon>
        <taxon>Pseudomonadati</taxon>
        <taxon>Pseudomonadota</taxon>
        <taxon>Alphaproteobacteria</taxon>
        <taxon>Caulobacterales</taxon>
        <taxon>Caulobacteraceae</taxon>
        <taxon>Caulobacter</taxon>
    </lineage>
</organism>
<evidence type="ECO:0000250" key="1">
    <source>
        <dbReference type="UniProtKB" id="P0A988"/>
    </source>
</evidence>
<evidence type="ECO:0000305" key="2"/>
<evidence type="ECO:0007829" key="3">
    <source>
        <dbReference type="PDB" id="5WCE"/>
    </source>
</evidence>
<evidence type="ECO:0007829" key="4">
    <source>
        <dbReference type="PDB" id="6IZO"/>
    </source>
</evidence>
<evidence type="ECO:0007829" key="5">
    <source>
        <dbReference type="PDB" id="6JIR"/>
    </source>
</evidence>
<comment type="function">
    <text evidence="1">Confers DNA tethering and processivity to DNA polymerases and other proteins. Acts as a clamp, forming a ring around DNA (a reaction catalyzed by the clamp-loading complex) which diffuses in an ATP-independent manner freely and bidirectionally along dsDNA. Initially characterized for its ability to contact the catalytic subunit of DNA polymerase III (Pol III), a complex, multichain enzyme responsible for most of the replicative synthesis in bacteria; Pol III exhibits 3'-5' exonuclease proofreading activity. The beta chain is required for initiation of replication as well as for processivity of DNA replication.</text>
</comment>
<comment type="subunit">
    <text evidence="1">Forms a ring-shaped head-to-tail homodimer around DNA which binds and tethers DNA polymerases and other proteins to the DNA. The DNA replisome complex has a single clamp-loading complex (3 tau and 1 each of delta, delta', psi and chi subunits) which binds 3 Pol III cores (1 core on the leading strand and 2 on the lagging strand) each with a beta sliding clamp dimer. Additional proteins in the replisome are other copies of gamma, psi and chi, Ssb, DNA helicase and RNA primase.</text>
</comment>
<comment type="subcellular location">
    <subcellularLocation>
        <location evidence="1">Cytoplasm</location>
    </subcellularLocation>
</comment>
<comment type="similarity">
    <text evidence="2">Belongs to the beta sliding clamp family.</text>
</comment>
<name>DPO3B_CAUVC</name>
<accession>P0CAU5</accession>
<accession>P48198</accession>
<accession>Q45999</accession>